<gene>
    <name evidence="1" type="primary">adk</name>
    <name type="ordered locus">Asuc_1819</name>
</gene>
<comment type="function">
    <text evidence="1">Catalyzes the reversible transfer of the terminal phosphate group between ATP and AMP. Plays an important role in cellular energy homeostasis and in adenine nucleotide metabolism.</text>
</comment>
<comment type="catalytic activity">
    <reaction evidence="1">
        <text>AMP + ATP = 2 ADP</text>
        <dbReference type="Rhea" id="RHEA:12973"/>
        <dbReference type="ChEBI" id="CHEBI:30616"/>
        <dbReference type="ChEBI" id="CHEBI:456215"/>
        <dbReference type="ChEBI" id="CHEBI:456216"/>
        <dbReference type="EC" id="2.7.4.3"/>
    </reaction>
</comment>
<comment type="pathway">
    <text evidence="1">Purine metabolism; AMP biosynthesis via salvage pathway; AMP from ADP: step 1/1.</text>
</comment>
<comment type="subunit">
    <text evidence="1">Monomer.</text>
</comment>
<comment type="subcellular location">
    <subcellularLocation>
        <location evidence="1">Cytoplasm</location>
    </subcellularLocation>
</comment>
<comment type="domain">
    <text evidence="1">Consists of three domains, a large central CORE domain and two small peripheral domains, NMPbind and LID, which undergo movements during catalysis. The LID domain closes over the site of phosphoryl transfer upon ATP binding. Assembling and dissambling the active center during each catalytic cycle provides an effective means to prevent ATP hydrolysis.</text>
</comment>
<comment type="similarity">
    <text evidence="1">Belongs to the adenylate kinase family.</text>
</comment>
<feature type="chain" id="PRO_1000071793" description="Adenylate kinase">
    <location>
        <begin position="1"/>
        <end position="214"/>
    </location>
</feature>
<feature type="region of interest" description="NMP" evidence="1">
    <location>
        <begin position="30"/>
        <end position="59"/>
    </location>
</feature>
<feature type="region of interest" description="LID" evidence="1">
    <location>
        <begin position="122"/>
        <end position="159"/>
    </location>
</feature>
<feature type="binding site" evidence="1">
    <location>
        <begin position="10"/>
        <end position="15"/>
    </location>
    <ligand>
        <name>ATP</name>
        <dbReference type="ChEBI" id="CHEBI:30616"/>
    </ligand>
</feature>
<feature type="binding site" evidence="1">
    <location>
        <position position="31"/>
    </location>
    <ligand>
        <name>AMP</name>
        <dbReference type="ChEBI" id="CHEBI:456215"/>
    </ligand>
</feature>
<feature type="binding site" evidence="1">
    <location>
        <position position="36"/>
    </location>
    <ligand>
        <name>AMP</name>
        <dbReference type="ChEBI" id="CHEBI:456215"/>
    </ligand>
</feature>
<feature type="binding site" evidence="1">
    <location>
        <begin position="57"/>
        <end position="59"/>
    </location>
    <ligand>
        <name>AMP</name>
        <dbReference type="ChEBI" id="CHEBI:456215"/>
    </ligand>
</feature>
<feature type="binding site" evidence="1">
    <location>
        <begin position="85"/>
        <end position="88"/>
    </location>
    <ligand>
        <name>AMP</name>
        <dbReference type="ChEBI" id="CHEBI:456215"/>
    </ligand>
</feature>
<feature type="binding site" evidence="1">
    <location>
        <position position="92"/>
    </location>
    <ligand>
        <name>AMP</name>
        <dbReference type="ChEBI" id="CHEBI:456215"/>
    </ligand>
</feature>
<feature type="binding site" evidence="1">
    <location>
        <position position="123"/>
    </location>
    <ligand>
        <name>ATP</name>
        <dbReference type="ChEBI" id="CHEBI:30616"/>
    </ligand>
</feature>
<feature type="binding site" evidence="1">
    <location>
        <begin position="132"/>
        <end position="133"/>
    </location>
    <ligand>
        <name>ATP</name>
        <dbReference type="ChEBI" id="CHEBI:30616"/>
    </ligand>
</feature>
<feature type="binding site" evidence="1">
    <location>
        <position position="156"/>
    </location>
    <ligand>
        <name>AMP</name>
        <dbReference type="ChEBI" id="CHEBI:456215"/>
    </ligand>
</feature>
<feature type="binding site" evidence="1">
    <location>
        <position position="167"/>
    </location>
    <ligand>
        <name>AMP</name>
        <dbReference type="ChEBI" id="CHEBI:456215"/>
    </ligand>
</feature>
<feature type="binding site" evidence="1">
    <location>
        <position position="200"/>
    </location>
    <ligand>
        <name>ATP</name>
        <dbReference type="ChEBI" id="CHEBI:30616"/>
    </ligand>
</feature>
<protein>
    <recommendedName>
        <fullName evidence="1">Adenylate kinase</fullName>
        <shortName evidence="1">AK</shortName>
        <ecNumber evidence="1">2.7.4.3</ecNumber>
    </recommendedName>
    <alternativeName>
        <fullName evidence="1">ATP-AMP transphosphorylase</fullName>
    </alternativeName>
    <alternativeName>
        <fullName evidence="1">ATP:AMP phosphotransferase</fullName>
    </alternativeName>
    <alternativeName>
        <fullName evidence="1">Adenylate monophosphate kinase</fullName>
    </alternativeName>
</protein>
<dbReference type="EC" id="2.7.4.3" evidence="1"/>
<dbReference type="EMBL" id="CP000746">
    <property type="protein sequence ID" value="ABR75170.1"/>
    <property type="molecule type" value="Genomic_DNA"/>
</dbReference>
<dbReference type="RefSeq" id="WP_012073547.1">
    <property type="nucleotide sequence ID" value="NC_009655.1"/>
</dbReference>
<dbReference type="SMR" id="A6VQC3"/>
<dbReference type="STRING" id="339671.Asuc_1819"/>
<dbReference type="KEGG" id="asu:Asuc_1819"/>
<dbReference type="eggNOG" id="COG0563">
    <property type="taxonomic scope" value="Bacteria"/>
</dbReference>
<dbReference type="HOGENOM" id="CLU_032354_1_2_6"/>
<dbReference type="OrthoDB" id="9805030at2"/>
<dbReference type="UniPathway" id="UPA00588">
    <property type="reaction ID" value="UER00649"/>
</dbReference>
<dbReference type="Proteomes" id="UP000001114">
    <property type="component" value="Chromosome"/>
</dbReference>
<dbReference type="GO" id="GO:0005737">
    <property type="term" value="C:cytoplasm"/>
    <property type="evidence" value="ECO:0007669"/>
    <property type="project" value="UniProtKB-SubCell"/>
</dbReference>
<dbReference type="GO" id="GO:0004017">
    <property type="term" value="F:adenylate kinase activity"/>
    <property type="evidence" value="ECO:0007669"/>
    <property type="project" value="UniProtKB-UniRule"/>
</dbReference>
<dbReference type="GO" id="GO:0005524">
    <property type="term" value="F:ATP binding"/>
    <property type="evidence" value="ECO:0007669"/>
    <property type="project" value="UniProtKB-UniRule"/>
</dbReference>
<dbReference type="GO" id="GO:0044209">
    <property type="term" value="P:AMP salvage"/>
    <property type="evidence" value="ECO:0007669"/>
    <property type="project" value="UniProtKB-UniRule"/>
</dbReference>
<dbReference type="CDD" id="cd01428">
    <property type="entry name" value="ADK"/>
    <property type="match status" value="1"/>
</dbReference>
<dbReference type="FunFam" id="3.40.50.300:FF:000106">
    <property type="entry name" value="Adenylate kinase mitochondrial"/>
    <property type="match status" value="1"/>
</dbReference>
<dbReference type="Gene3D" id="3.40.50.300">
    <property type="entry name" value="P-loop containing nucleotide triphosphate hydrolases"/>
    <property type="match status" value="1"/>
</dbReference>
<dbReference type="HAMAP" id="MF_00235">
    <property type="entry name" value="Adenylate_kinase_Adk"/>
    <property type="match status" value="1"/>
</dbReference>
<dbReference type="InterPro" id="IPR006259">
    <property type="entry name" value="Adenyl_kin_sub"/>
</dbReference>
<dbReference type="InterPro" id="IPR000850">
    <property type="entry name" value="Adenylat/UMP-CMP_kin"/>
</dbReference>
<dbReference type="InterPro" id="IPR033690">
    <property type="entry name" value="Adenylat_kinase_CS"/>
</dbReference>
<dbReference type="InterPro" id="IPR007862">
    <property type="entry name" value="Adenylate_kinase_lid-dom"/>
</dbReference>
<dbReference type="InterPro" id="IPR027417">
    <property type="entry name" value="P-loop_NTPase"/>
</dbReference>
<dbReference type="NCBIfam" id="TIGR01351">
    <property type="entry name" value="adk"/>
    <property type="match status" value="1"/>
</dbReference>
<dbReference type="NCBIfam" id="NF001379">
    <property type="entry name" value="PRK00279.1-1"/>
    <property type="match status" value="1"/>
</dbReference>
<dbReference type="NCBIfam" id="NF001380">
    <property type="entry name" value="PRK00279.1-2"/>
    <property type="match status" value="1"/>
</dbReference>
<dbReference type="NCBIfam" id="NF001381">
    <property type="entry name" value="PRK00279.1-3"/>
    <property type="match status" value="1"/>
</dbReference>
<dbReference type="PANTHER" id="PTHR23359">
    <property type="entry name" value="NUCLEOTIDE KINASE"/>
    <property type="match status" value="1"/>
</dbReference>
<dbReference type="Pfam" id="PF00406">
    <property type="entry name" value="ADK"/>
    <property type="match status" value="1"/>
</dbReference>
<dbReference type="Pfam" id="PF05191">
    <property type="entry name" value="ADK_lid"/>
    <property type="match status" value="1"/>
</dbReference>
<dbReference type="PRINTS" id="PR00094">
    <property type="entry name" value="ADENYLTKNASE"/>
</dbReference>
<dbReference type="SUPFAM" id="SSF52540">
    <property type="entry name" value="P-loop containing nucleoside triphosphate hydrolases"/>
    <property type="match status" value="1"/>
</dbReference>
<dbReference type="PROSITE" id="PS00113">
    <property type="entry name" value="ADENYLATE_KINASE"/>
    <property type="match status" value="1"/>
</dbReference>
<keyword id="KW-0067">ATP-binding</keyword>
<keyword id="KW-0963">Cytoplasm</keyword>
<keyword id="KW-0418">Kinase</keyword>
<keyword id="KW-0545">Nucleotide biosynthesis</keyword>
<keyword id="KW-0547">Nucleotide-binding</keyword>
<keyword id="KW-1185">Reference proteome</keyword>
<keyword id="KW-0808">Transferase</keyword>
<organism>
    <name type="scientific">Actinobacillus succinogenes (strain ATCC 55618 / DSM 22257 / CCUG 43843 / 130Z)</name>
    <dbReference type="NCBI Taxonomy" id="339671"/>
    <lineage>
        <taxon>Bacteria</taxon>
        <taxon>Pseudomonadati</taxon>
        <taxon>Pseudomonadota</taxon>
        <taxon>Gammaproteobacteria</taxon>
        <taxon>Pasteurellales</taxon>
        <taxon>Pasteurellaceae</taxon>
        <taxon>Actinobacillus</taxon>
    </lineage>
</organism>
<reference key="1">
    <citation type="journal article" date="2010" name="BMC Genomics">
        <title>A genomic perspective on the potential of Actinobacillus succinogenes for industrial succinate production.</title>
        <authorList>
            <person name="McKinlay J.B."/>
            <person name="Laivenieks M."/>
            <person name="Schindler B.D."/>
            <person name="McKinlay A.A."/>
            <person name="Siddaramappa S."/>
            <person name="Challacombe J.F."/>
            <person name="Lowry S.R."/>
            <person name="Clum A."/>
            <person name="Lapidus A.L."/>
            <person name="Burkhart K.B."/>
            <person name="Harkins V."/>
            <person name="Vieille C."/>
        </authorList>
    </citation>
    <scope>NUCLEOTIDE SEQUENCE [LARGE SCALE GENOMIC DNA]</scope>
    <source>
        <strain>ATCC 55618 / DSM 22257 / CCUG 43843 / 130Z</strain>
    </source>
</reference>
<accession>A6VQC3</accession>
<name>KAD_ACTSZ</name>
<sequence>MKIILLGAPGAGKGTQAQFIMNKFGIPQISTGDMLRAAIKAGTELGKQAKTLMDAGQLVPDDLIIALVQDRVAQPDCEKGFLLDGFPRTIPQADALKAAGIGIDYVLEFDVADEVIVERMSGRRVHPASGRSYHVVYNPPKVEGKDDVTGEDLIIRADDKPETVLDRLKVYHTTTRPLVDYYQAEAKAGNTRYFRLDGTQPVEAVSRELDKILA</sequence>
<evidence type="ECO:0000255" key="1">
    <source>
        <dbReference type="HAMAP-Rule" id="MF_00235"/>
    </source>
</evidence>
<proteinExistence type="inferred from homology"/>